<sequence>MDHLVFEVGTALVLVAIASVIANKIKFSIIPFLIVLGMLVGPHAPKMGIIDLTFIQSSEIIEFFGRMGVLFLLFYLGLEFSVGKLIKSGKSIAVGGTIYILINFSLGLLYGFITGFSFLEVLILAGVITISSSAIVAKVLVDLKRTANPETELILGIIMFEDIFLAVYLSVVSGLILGDATSVGSALLSILIAFGYMLLFFIAARKLPPLLNKLLDIRSNEVFIIVIFAALFFIAGFSETIHVAEAIGALLLGLVFSETEHSDRIEHLVVPFRDFFGAMFFFSFGLSIDPFSLGEAVWLALGAVILTILGNFIAGMVAGRRAGLSHKASSNIGLTIVSRGEFSIIVANLGIAGGLSATLKPFAALYVLILAILGPLVTKESKRIYRLLNKVFKWKPEVQPAKKQG</sequence>
<reference key="1">
    <citation type="journal article" date="1998" name="Microbiology">
        <title>The 172 kb prkA-addAB region from 83 degrees to 97 degrees of the Bacillus subtilis chromosome contains several dysfunctional genes, the glyB marker, many genes encoding transporter proteins, and the ubiquitous hit gene.</title>
        <authorList>
            <person name="Noback M.A."/>
            <person name="Holsappel S."/>
            <person name="Kiewiet R."/>
            <person name="Terpstra P."/>
            <person name="Wambutt R."/>
            <person name="Wedler H."/>
            <person name="Venema G."/>
            <person name="Bron S."/>
        </authorList>
    </citation>
    <scope>NUCLEOTIDE SEQUENCE [GENOMIC DNA]</scope>
    <source>
        <strain>168</strain>
    </source>
</reference>
<reference key="2">
    <citation type="journal article" date="1997" name="Nature">
        <title>The complete genome sequence of the Gram-positive bacterium Bacillus subtilis.</title>
        <authorList>
            <person name="Kunst F."/>
            <person name="Ogasawara N."/>
            <person name="Moszer I."/>
            <person name="Albertini A.M."/>
            <person name="Alloni G."/>
            <person name="Azevedo V."/>
            <person name="Bertero M.G."/>
            <person name="Bessieres P."/>
            <person name="Bolotin A."/>
            <person name="Borchert S."/>
            <person name="Borriss R."/>
            <person name="Boursier L."/>
            <person name="Brans A."/>
            <person name="Braun M."/>
            <person name="Brignell S.C."/>
            <person name="Bron S."/>
            <person name="Brouillet S."/>
            <person name="Bruschi C.V."/>
            <person name="Caldwell B."/>
            <person name="Capuano V."/>
            <person name="Carter N.M."/>
            <person name="Choi S.-K."/>
            <person name="Codani J.-J."/>
            <person name="Connerton I.F."/>
            <person name="Cummings N.J."/>
            <person name="Daniel R.A."/>
            <person name="Denizot F."/>
            <person name="Devine K.M."/>
            <person name="Duesterhoeft A."/>
            <person name="Ehrlich S.D."/>
            <person name="Emmerson P.T."/>
            <person name="Entian K.-D."/>
            <person name="Errington J."/>
            <person name="Fabret C."/>
            <person name="Ferrari E."/>
            <person name="Foulger D."/>
            <person name="Fritz C."/>
            <person name="Fujita M."/>
            <person name="Fujita Y."/>
            <person name="Fuma S."/>
            <person name="Galizzi A."/>
            <person name="Galleron N."/>
            <person name="Ghim S.-Y."/>
            <person name="Glaser P."/>
            <person name="Goffeau A."/>
            <person name="Golightly E.J."/>
            <person name="Grandi G."/>
            <person name="Guiseppi G."/>
            <person name="Guy B.J."/>
            <person name="Haga K."/>
            <person name="Haiech J."/>
            <person name="Harwood C.R."/>
            <person name="Henaut A."/>
            <person name="Hilbert H."/>
            <person name="Holsappel S."/>
            <person name="Hosono S."/>
            <person name="Hullo M.-F."/>
            <person name="Itaya M."/>
            <person name="Jones L.-M."/>
            <person name="Joris B."/>
            <person name="Karamata D."/>
            <person name="Kasahara Y."/>
            <person name="Klaerr-Blanchard M."/>
            <person name="Klein C."/>
            <person name="Kobayashi Y."/>
            <person name="Koetter P."/>
            <person name="Koningstein G."/>
            <person name="Krogh S."/>
            <person name="Kumano M."/>
            <person name="Kurita K."/>
            <person name="Lapidus A."/>
            <person name="Lardinois S."/>
            <person name="Lauber J."/>
            <person name="Lazarevic V."/>
            <person name="Lee S.-M."/>
            <person name="Levine A."/>
            <person name="Liu H."/>
            <person name="Masuda S."/>
            <person name="Mauel C."/>
            <person name="Medigue C."/>
            <person name="Medina N."/>
            <person name="Mellado R.P."/>
            <person name="Mizuno M."/>
            <person name="Moestl D."/>
            <person name="Nakai S."/>
            <person name="Noback M."/>
            <person name="Noone D."/>
            <person name="O'Reilly M."/>
            <person name="Ogawa K."/>
            <person name="Ogiwara A."/>
            <person name="Oudega B."/>
            <person name="Park S.-H."/>
            <person name="Parro V."/>
            <person name="Pohl T.M."/>
            <person name="Portetelle D."/>
            <person name="Porwollik S."/>
            <person name="Prescott A.M."/>
            <person name="Presecan E."/>
            <person name="Pujic P."/>
            <person name="Purnelle B."/>
            <person name="Rapoport G."/>
            <person name="Rey M."/>
            <person name="Reynolds S."/>
            <person name="Rieger M."/>
            <person name="Rivolta C."/>
            <person name="Rocha E."/>
            <person name="Roche B."/>
            <person name="Rose M."/>
            <person name="Sadaie Y."/>
            <person name="Sato T."/>
            <person name="Scanlan E."/>
            <person name="Schleich S."/>
            <person name="Schroeter R."/>
            <person name="Scoffone F."/>
            <person name="Sekiguchi J."/>
            <person name="Sekowska A."/>
            <person name="Seror S.J."/>
            <person name="Serror P."/>
            <person name="Shin B.-S."/>
            <person name="Soldo B."/>
            <person name="Sorokin A."/>
            <person name="Tacconi E."/>
            <person name="Takagi T."/>
            <person name="Takahashi H."/>
            <person name="Takemaru K."/>
            <person name="Takeuchi M."/>
            <person name="Tamakoshi A."/>
            <person name="Tanaka T."/>
            <person name="Terpstra P."/>
            <person name="Tognoni A."/>
            <person name="Tosato V."/>
            <person name="Uchiyama S."/>
            <person name="Vandenbol M."/>
            <person name="Vannier F."/>
            <person name="Vassarotti A."/>
            <person name="Viari A."/>
            <person name="Wambutt R."/>
            <person name="Wedler E."/>
            <person name="Wedler H."/>
            <person name="Weitzenegger T."/>
            <person name="Winters P."/>
            <person name="Wipat A."/>
            <person name="Yamamoto H."/>
            <person name="Yamane K."/>
            <person name="Yasumoto K."/>
            <person name="Yata K."/>
            <person name="Yoshida K."/>
            <person name="Yoshikawa H.-F."/>
            <person name="Zumstein E."/>
            <person name="Yoshikawa H."/>
            <person name="Danchin A."/>
        </authorList>
    </citation>
    <scope>NUCLEOTIDE SEQUENCE [LARGE SCALE GENOMIC DNA]</scope>
    <source>
        <strain>168</strain>
    </source>
</reference>
<reference key="3">
    <citation type="journal article" date="2004" name="FEMS Microbiol. Lett.">
        <title>Modulation of the K+ efflux activity of Bacillus subtilis YhaU by YhaT and the C-terminal region of YhaS.</title>
        <authorList>
            <person name="Fujisawa M."/>
            <person name="Wada Y."/>
            <person name="Ito M."/>
        </authorList>
    </citation>
    <scope>FUNCTION</scope>
    <scope>ACTIVITY REGULATION</scope>
    <scope>SUBUNIT</scope>
    <scope>SUBCELLULAR LOCATION</scope>
    <scope>IDENTIFICATION OF THE KHTSTU OPERON</scope>
    <scope>INDUCTION</scope>
</reference>
<reference key="4">
    <citation type="journal article" date="2007" name="Proc. Natl. Acad. Sci. U.S.A.">
        <title>Three two-component transporters with channel-like properties have monovalent cation/proton antiport activity.</title>
        <authorList>
            <person name="Fujisawa M."/>
            <person name="Ito M."/>
            <person name="Krulwich T.A."/>
        </authorList>
    </citation>
    <scope>FUNCTION AS AN ANTIPORTER</scope>
    <scope>ACTIVITY REGULATION</scope>
    <scope>SUBUNIT</scope>
</reference>
<reference key="5">
    <citation type="journal article" date="2014" name="Mol. Microbiol.">
        <title>Methylglyoxal resistance in Bacillus subtilis: contributions of bacillithiol-dependent and independent pathways.</title>
        <authorList>
            <person name="Chandrangsu P."/>
            <person name="Dusi R."/>
            <person name="Hamilton C.J."/>
            <person name="Helmann J.D."/>
        </authorList>
    </citation>
    <scope>FUNCTION IN METHYLGLYOXAL RESISTANCE</scope>
    <scope>DISRUPTION PHENOTYPE</scope>
</reference>
<feature type="chain" id="PRO_0000360834" description="K(+)/H(+) antiporter subunit KhtU">
    <location>
        <begin position="1"/>
        <end position="405"/>
    </location>
</feature>
<feature type="transmembrane region" description="Helical" evidence="1">
    <location>
        <begin position="3"/>
        <end position="23"/>
    </location>
</feature>
<feature type="transmembrane region" description="Helical" evidence="1">
    <location>
        <begin position="29"/>
        <end position="49"/>
    </location>
</feature>
<feature type="transmembrane region" description="Helical" evidence="1">
    <location>
        <begin position="60"/>
        <end position="80"/>
    </location>
</feature>
<feature type="transmembrane region" description="Helical" evidence="1">
    <location>
        <begin position="85"/>
        <end position="105"/>
    </location>
</feature>
<feature type="transmembrane region" description="Helical" evidence="1">
    <location>
        <begin position="108"/>
        <end position="128"/>
    </location>
</feature>
<feature type="transmembrane region" description="Helical" evidence="1">
    <location>
        <begin position="153"/>
        <end position="173"/>
    </location>
</feature>
<feature type="transmembrane region" description="Helical" evidence="1">
    <location>
        <begin position="183"/>
        <end position="203"/>
    </location>
</feature>
<feature type="transmembrane region" description="Helical" evidence="1">
    <location>
        <begin position="222"/>
        <end position="242"/>
    </location>
</feature>
<feature type="transmembrane region" description="Helical" evidence="1">
    <location>
        <begin position="268"/>
        <end position="288"/>
    </location>
</feature>
<feature type="transmembrane region" description="Helical" evidence="1">
    <location>
        <begin position="297"/>
        <end position="317"/>
    </location>
</feature>
<feature type="transmembrane region" description="Helical" evidence="1">
    <location>
        <begin position="332"/>
        <end position="352"/>
    </location>
</feature>
<feature type="transmembrane region" description="Helical" evidence="1">
    <location>
        <begin position="357"/>
        <end position="377"/>
    </location>
</feature>
<evidence type="ECO:0000255" key="1"/>
<evidence type="ECO:0000269" key="2">
    <source>
    </source>
</evidence>
<evidence type="ECO:0000269" key="3">
    <source>
    </source>
</evidence>
<evidence type="ECO:0000269" key="4">
    <source>
    </source>
</evidence>
<evidence type="ECO:0000303" key="5">
    <source>
    </source>
</evidence>
<evidence type="ECO:0000305" key="6"/>
<evidence type="ECO:0000305" key="7">
    <source>
    </source>
</evidence>
<name>KHTU_BACSU</name>
<organism>
    <name type="scientific">Bacillus subtilis (strain 168)</name>
    <dbReference type="NCBI Taxonomy" id="224308"/>
    <lineage>
        <taxon>Bacteria</taxon>
        <taxon>Bacillati</taxon>
        <taxon>Bacillota</taxon>
        <taxon>Bacilli</taxon>
        <taxon>Bacillales</taxon>
        <taxon>Bacillaceae</taxon>
        <taxon>Bacillus</taxon>
    </lineage>
</organism>
<accession>O07536</accession>
<accession>Q796V7</accession>
<keyword id="KW-0050">Antiport</keyword>
<keyword id="KW-1003">Cell membrane</keyword>
<keyword id="KW-0406">Ion transport</keyword>
<keyword id="KW-0472">Membrane</keyword>
<keyword id="KW-0630">Potassium</keyword>
<keyword id="KW-0633">Potassium transport</keyword>
<keyword id="KW-1185">Reference proteome</keyword>
<keyword id="KW-0812">Transmembrane</keyword>
<keyword id="KW-1133">Transmembrane helix</keyword>
<keyword id="KW-0813">Transport</keyword>
<gene>
    <name evidence="5" type="primary">khtU</name>
    <name type="synonym">yhaU</name>
    <name type="ordered locus">BSU09850</name>
</gene>
<proteinExistence type="evidence at protein level"/>
<dbReference type="EMBL" id="Y14080">
    <property type="protein sequence ID" value="CAA74453.1"/>
    <property type="status" value="ALT_INIT"/>
    <property type="molecule type" value="Genomic_DNA"/>
</dbReference>
<dbReference type="EMBL" id="AL009126">
    <property type="protein sequence ID" value="CAB12825.2"/>
    <property type="molecule type" value="Genomic_DNA"/>
</dbReference>
<dbReference type="PIR" id="G69819">
    <property type="entry name" value="G69819"/>
</dbReference>
<dbReference type="RefSeq" id="NP_388866.2">
    <property type="nucleotide sequence ID" value="NC_000964.3"/>
</dbReference>
<dbReference type="RefSeq" id="WP_003233272.1">
    <property type="nucleotide sequence ID" value="NZ_OZ025638.1"/>
</dbReference>
<dbReference type="SMR" id="O07536"/>
<dbReference type="FunCoup" id="O07536">
    <property type="interactions" value="378"/>
</dbReference>
<dbReference type="STRING" id="224308.BSU09850"/>
<dbReference type="TCDB" id="2.A.37.5.2">
    <property type="family name" value="the monovalent cation:proton antiporter-2 (cpa2) family"/>
</dbReference>
<dbReference type="PaxDb" id="224308-BSU09850"/>
<dbReference type="EnsemblBacteria" id="CAB12825">
    <property type="protein sequence ID" value="CAB12825"/>
    <property type="gene ID" value="BSU_09850"/>
</dbReference>
<dbReference type="GeneID" id="939761"/>
<dbReference type="KEGG" id="bsu:BSU09850"/>
<dbReference type="PATRIC" id="fig|224308.179.peg.1057"/>
<dbReference type="eggNOG" id="COG0475">
    <property type="taxonomic scope" value="Bacteria"/>
</dbReference>
<dbReference type="InParanoid" id="O07536"/>
<dbReference type="OrthoDB" id="9781411at2"/>
<dbReference type="PhylomeDB" id="O07536"/>
<dbReference type="BioCyc" id="BSUB:BSU09850-MONOMER"/>
<dbReference type="Proteomes" id="UP000001570">
    <property type="component" value="Chromosome"/>
</dbReference>
<dbReference type="GO" id="GO:0005886">
    <property type="term" value="C:plasma membrane"/>
    <property type="evidence" value="ECO:0007669"/>
    <property type="project" value="UniProtKB-SubCell"/>
</dbReference>
<dbReference type="GO" id="GO:0015297">
    <property type="term" value="F:antiporter activity"/>
    <property type="evidence" value="ECO:0007669"/>
    <property type="project" value="UniProtKB-KW"/>
</dbReference>
<dbReference type="GO" id="GO:0006813">
    <property type="term" value="P:potassium ion transport"/>
    <property type="evidence" value="ECO:0007669"/>
    <property type="project" value="UniProtKB-KW"/>
</dbReference>
<dbReference type="GO" id="GO:1902600">
    <property type="term" value="P:proton transmembrane transport"/>
    <property type="evidence" value="ECO:0007669"/>
    <property type="project" value="InterPro"/>
</dbReference>
<dbReference type="Gene3D" id="1.20.1530.20">
    <property type="match status" value="1"/>
</dbReference>
<dbReference type="InterPro" id="IPR006153">
    <property type="entry name" value="Cation/H_exchanger_TM"/>
</dbReference>
<dbReference type="InterPro" id="IPR038770">
    <property type="entry name" value="Na+/solute_symporter_sf"/>
</dbReference>
<dbReference type="PANTHER" id="PTHR42751:SF4">
    <property type="entry name" value="K(+)_H(+) ANTIPORTER SUBUNIT KHTU"/>
    <property type="match status" value="1"/>
</dbReference>
<dbReference type="PANTHER" id="PTHR42751">
    <property type="entry name" value="SODIUM/HYDROGEN EXCHANGER FAMILY/TRKA DOMAIN PROTEIN"/>
    <property type="match status" value="1"/>
</dbReference>
<dbReference type="Pfam" id="PF00999">
    <property type="entry name" value="Na_H_Exchanger"/>
    <property type="match status" value="1"/>
</dbReference>
<comment type="function">
    <text evidence="2 3 4">Potassium/proton antiporter that mediates the efflux of potassium ions from the cell (PubMed:17679694). Can also mediate rubidium/proton antiport, but has no permeability for sodium or lithium ions. In the absence of KhtT, does not have antiport activity, but can catalyze potassium efflux (PubMed:14987767, PubMed:17679694). Involved in protection of the cell from methylglyoxal, a toxic by-product of glycolysis, via activation by S-lactoyl-BSH of the antiporter activity, leading to cytoplasmic acidification and methylglyoxal resistance (PubMed:24330391).</text>
</comment>
<comment type="activity regulation">
    <text evidence="2 3">Potassium antiport activity requires the presence of KhtT. Activity is also modulated by KhtS. Has higher activity at alkaline pH.</text>
</comment>
<comment type="subunit">
    <text evidence="2 3">The transporter is composed of the integral membrane protein KhtU and the regulatory protein KhtT.</text>
</comment>
<comment type="subcellular location">
    <subcellularLocation>
        <location evidence="7">Cell membrane</location>
        <topology evidence="1">Multi-pass membrane protein</topology>
    </subcellularLocation>
</comment>
<comment type="induction">
    <text evidence="2">Part of the khtSTU operon. Induced by salt stress at alkaline pH.</text>
</comment>
<comment type="disruption phenotype">
    <text evidence="4">Deletion mutant is more sensitive to methylglyoxal than wild-type.</text>
</comment>
<comment type="similarity">
    <text evidence="6">Belongs to the monovalent cation:proton antiporter 2 (CPA2) transporter (TC 2.A.37) family.</text>
</comment>
<comment type="sequence caution" evidence="6">
    <conflict type="erroneous initiation">
        <sequence resource="EMBL-CDS" id="CAA74453"/>
    </conflict>
</comment>
<protein>
    <recommendedName>
        <fullName evidence="6">K(+)/H(+) antiporter subunit KhtU</fullName>
    </recommendedName>
</protein>